<organism>
    <name type="scientific">Buchnera aphidicola subsp. Acyrthosiphon pisum (strain APS)</name>
    <name type="common">Acyrthosiphon pisum symbiotic bacterium</name>
    <dbReference type="NCBI Taxonomy" id="107806"/>
    <lineage>
        <taxon>Bacteria</taxon>
        <taxon>Pseudomonadati</taxon>
        <taxon>Pseudomonadota</taxon>
        <taxon>Gammaproteobacteria</taxon>
        <taxon>Enterobacterales</taxon>
        <taxon>Erwiniaceae</taxon>
        <taxon>Buchnera</taxon>
    </lineage>
</organism>
<reference key="1">
    <citation type="journal article" date="2000" name="Nature">
        <title>Genome sequence of the endocellular bacterial symbiont of aphids Buchnera sp. APS.</title>
        <authorList>
            <person name="Shigenobu S."/>
            <person name="Watanabe H."/>
            <person name="Hattori M."/>
            <person name="Sakaki Y."/>
            <person name="Ishikawa H."/>
        </authorList>
    </citation>
    <scope>NUCLEOTIDE SEQUENCE [LARGE SCALE GENOMIC DNA]</scope>
    <source>
        <strain>APS</strain>
    </source>
</reference>
<protein>
    <recommendedName>
        <fullName evidence="1">Bifunctional protein GlmU</fullName>
    </recommendedName>
    <domain>
        <recommendedName>
            <fullName evidence="1">UDP-N-acetylglucosamine pyrophosphorylase</fullName>
            <ecNumber evidence="1">2.7.7.23</ecNumber>
        </recommendedName>
        <alternativeName>
            <fullName evidence="1">N-acetylglucosamine-1-phosphate uridyltransferase</fullName>
        </alternativeName>
    </domain>
    <domain>
        <recommendedName>
            <fullName evidence="1">Glucosamine-1-phosphate N-acetyltransferase</fullName>
            <ecNumber evidence="1">2.3.1.157</ecNumber>
        </recommendedName>
    </domain>
</protein>
<proteinExistence type="inferred from homology"/>
<gene>
    <name evidence="1" type="primary">glmU</name>
    <name type="ordered locus">BU027</name>
</gene>
<dbReference type="EC" id="2.7.7.23" evidence="1"/>
<dbReference type="EC" id="2.3.1.157" evidence="1"/>
<dbReference type="EMBL" id="BA000003">
    <property type="protein sequence ID" value="BAB12754.1"/>
    <property type="molecule type" value="Genomic_DNA"/>
</dbReference>
<dbReference type="RefSeq" id="NP_239868.1">
    <property type="nucleotide sequence ID" value="NC_002528.1"/>
</dbReference>
<dbReference type="RefSeq" id="WP_009873988.1">
    <property type="nucleotide sequence ID" value="NZ_AP036055.1"/>
</dbReference>
<dbReference type="SMR" id="P57139"/>
<dbReference type="STRING" id="563178.BUAP5A_027"/>
<dbReference type="EnsemblBacteria" id="BAB12754">
    <property type="protein sequence ID" value="BAB12754"/>
    <property type="gene ID" value="BAB12754"/>
</dbReference>
<dbReference type="KEGG" id="buc:BU027"/>
<dbReference type="PATRIC" id="fig|107806.10.peg.39"/>
<dbReference type="eggNOG" id="COG1207">
    <property type="taxonomic scope" value="Bacteria"/>
</dbReference>
<dbReference type="HOGENOM" id="CLU_029499_15_2_6"/>
<dbReference type="UniPathway" id="UPA00113">
    <property type="reaction ID" value="UER00532"/>
</dbReference>
<dbReference type="UniPathway" id="UPA00113">
    <property type="reaction ID" value="UER00533"/>
</dbReference>
<dbReference type="UniPathway" id="UPA00973"/>
<dbReference type="Proteomes" id="UP000001806">
    <property type="component" value="Chromosome"/>
</dbReference>
<dbReference type="GO" id="GO:0005737">
    <property type="term" value="C:cytoplasm"/>
    <property type="evidence" value="ECO:0007669"/>
    <property type="project" value="UniProtKB-SubCell"/>
</dbReference>
<dbReference type="GO" id="GO:0016020">
    <property type="term" value="C:membrane"/>
    <property type="evidence" value="ECO:0007669"/>
    <property type="project" value="GOC"/>
</dbReference>
<dbReference type="GO" id="GO:0019134">
    <property type="term" value="F:glucosamine-1-phosphate N-acetyltransferase activity"/>
    <property type="evidence" value="ECO:0007669"/>
    <property type="project" value="UniProtKB-UniRule"/>
</dbReference>
<dbReference type="GO" id="GO:0000287">
    <property type="term" value="F:magnesium ion binding"/>
    <property type="evidence" value="ECO:0007669"/>
    <property type="project" value="UniProtKB-UniRule"/>
</dbReference>
<dbReference type="GO" id="GO:0003977">
    <property type="term" value="F:UDP-N-acetylglucosamine diphosphorylase activity"/>
    <property type="evidence" value="ECO:0007669"/>
    <property type="project" value="UniProtKB-UniRule"/>
</dbReference>
<dbReference type="GO" id="GO:0000902">
    <property type="term" value="P:cell morphogenesis"/>
    <property type="evidence" value="ECO:0007669"/>
    <property type="project" value="UniProtKB-UniRule"/>
</dbReference>
<dbReference type="GO" id="GO:0071555">
    <property type="term" value="P:cell wall organization"/>
    <property type="evidence" value="ECO:0007669"/>
    <property type="project" value="UniProtKB-KW"/>
</dbReference>
<dbReference type="GO" id="GO:0009245">
    <property type="term" value="P:lipid A biosynthetic process"/>
    <property type="evidence" value="ECO:0007669"/>
    <property type="project" value="UniProtKB-UniRule"/>
</dbReference>
<dbReference type="GO" id="GO:0009252">
    <property type="term" value="P:peptidoglycan biosynthetic process"/>
    <property type="evidence" value="ECO:0007669"/>
    <property type="project" value="UniProtKB-UniRule"/>
</dbReference>
<dbReference type="GO" id="GO:0008360">
    <property type="term" value="P:regulation of cell shape"/>
    <property type="evidence" value="ECO:0007669"/>
    <property type="project" value="UniProtKB-KW"/>
</dbReference>
<dbReference type="GO" id="GO:0006048">
    <property type="term" value="P:UDP-N-acetylglucosamine biosynthetic process"/>
    <property type="evidence" value="ECO:0007669"/>
    <property type="project" value="UniProtKB-UniPathway"/>
</dbReference>
<dbReference type="CDD" id="cd02540">
    <property type="entry name" value="GT2_GlmU_N_bac"/>
    <property type="match status" value="1"/>
</dbReference>
<dbReference type="CDD" id="cd03353">
    <property type="entry name" value="LbH_GlmU_C"/>
    <property type="match status" value="1"/>
</dbReference>
<dbReference type="Gene3D" id="2.160.10.10">
    <property type="entry name" value="Hexapeptide repeat proteins"/>
    <property type="match status" value="1"/>
</dbReference>
<dbReference type="Gene3D" id="3.90.550.10">
    <property type="entry name" value="Spore Coat Polysaccharide Biosynthesis Protein SpsA, Chain A"/>
    <property type="match status" value="1"/>
</dbReference>
<dbReference type="HAMAP" id="MF_01631">
    <property type="entry name" value="GlmU"/>
    <property type="match status" value="1"/>
</dbReference>
<dbReference type="InterPro" id="IPR005882">
    <property type="entry name" value="Bifunctional_GlmU"/>
</dbReference>
<dbReference type="InterPro" id="IPR050065">
    <property type="entry name" value="GlmU-like"/>
</dbReference>
<dbReference type="InterPro" id="IPR038009">
    <property type="entry name" value="GlmU_C_LbH"/>
</dbReference>
<dbReference type="InterPro" id="IPR001451">
    <property type="entry name" value="Hexapep"/>
</dbReference>
<dbReference type="InterPro" id="IPR018357">
    <property type="entry name" value="Hexapep_transf_CS"/>
</dbReference>
<dbReference type="InterPro" id="IPR025877">
    <property type="entry name" value="MobA-like_NTP_Trfase"/>
</dbReference>
<dbReference type="InterPro" id="IPR029044">
    <property type="entry name" value="Nucleotide-diphossugar_trans"/>
</dbReference>
<dbReference type="InterPro" id="IPR011004">
    <property type="entry name" value="Trimer_LpxA-like_sf"/>
</dbReference>
<dbReference type="NCBIfam" id="TIGR01173">
    <property type="entry name" value="glmU"/>
    <property type="match status" value="1"/>
</dbReference>
<dbReference type="PANTHER" id="PTHR43584:SF3">
    <property type="entry name" value="BIFUNCTIONAL PROTEIN GLMU"/>
    <property type="match status" value="1"/>
</dbReference>
<dbReference type="PANTHER" id="PTHR43584">
    <property type="entry name" value="NUCLEOTIDYL TRANSFERASE"/>
    <property type="match status" value="1"/>
</dbReference>
<dbReference type="Pfam" id="PF00132">
    <property type="entry name" value="Hexapep"/>
    <property type="match status" value="3"/>
</dbReference>
<dbReference type="Pfam" id="PF12804">
    <property type="entry name" value="NTP_transf_3"/>
    <property type="match status" value="1"/>
</dbReference>
<dbReference type="SUPFAM" id="SSF53448">
    <property type="entry name" value="Nucleotide-diphospho-sugar transferases"/>
    <property type="match status" value="1"/>
</dbReference>
<dbReference type="SUPFAM" id="SSF51161">
    <property type="entry name" value="Trimeric LpxA-like enzymes"/>
    <property type="match status" value="1"/>
</dbReference>
<dbReference type="PROSITE" id="PS00101">
    <property type="entry name" value="HEXAPEP_TRANSFERASES"/>
    <property type="match status" value="1"/>
</dbReference>
<feature type="chain" id="PRO_0000068698" description="Bifunctional protein GlmU">
    <location>
        <begin position="1"/>
        <end position="459"/>
    </location>
</feature>
<feature type="region of interest" description="Pyrophosphorylase" evidence="1">
    <location>
        <begin position="1"/>
        <end position="229"/>
    </location>
</feature>
<feature type="region of interest" description="Linker" evidence="1">
    <location>
        <begin position="230"/>
        <end position="250"/>
    </location>
</feature>
<feature type="region of interest" description="N-acetyltransferase" evidence="1">
    <location>
        <begin position="251"/>
        <end position="459"/>
    </location>
</feature>
<feature type="active site" description="Proton acceptor" evidence="1">
    <location>
        <position position="363"/>
    </location>
</feature>
<feature type="binding site" evidence="1">
    <location>
        <begin position="11"/>
        <end position="14"/>
    </location>
    <ligand>
        <name>UDP-N-acetyl-alpha-D-glucosamine</name>
        <dbReference type="ChEBI" id="CHEBI:57705"/>
    </ligand>
</feature>
<feature type="binding site" evidence="1">
    <location>
        <position position="25"/>
    </location>
    <ligand>
        <name>UDP-N-acetyl-alpha-D-glucosamine</name>
        <dbReference type="ChEBI" id="CHEBI:57705"/>
    </ligand>
</feature>
<feature type="binding site" evidence="1">
    <location>
        <position position="76"/>
    </location>
    <ligand>
        <name>UDP-N-acetyl-alpha-D-glucosamine</name>
        <dbReference type="ChEBI" id="CHEBI:57705"/>
    </ligand>
</feature>
<feature type="binding site" evidence="1">
    <location>
        <begin position="81"/>
        <end position="82"/>
    </location>
    <ligand>
        <name>UDP-N-acetyl-alpha-D-glucosamine</name>
        <dbReference type="ChEBI" id="CHEBI:57705"/>
    </ligand>
</feature>
<feature type="binding site" evidence="1">
    <location>
        <begin position="103"/>
        <end position="105"/>
    </location>
    <ligand>
        <name>UDP-N-acetyl-alpha-D-glucosamine</name>
        <dbReference type="ChEBI" id="CHEBI:57705"/>
    </ligand>
</feature>
<feature type="binding site" evidence="1">
    <location>
        <position position="105"/>
    </location>
    <ligand>
        <name>Mg(2+)</name>
        <dbReference type="ChEBI" id="CHEBI:18420"/>
    </ligand>
</feature>
<feature type="binding site" evidence="1">
    <location>
        <position position="140"/>
    </location>
    <ligand>
        <name>UDP-N-acetyl-alpha-D-glucosamine</name>
        <dbReference type="ChEBI" id="CHEBI:57705"/>
    </ligand>
</feature>
<feature type="binding site" evidence="1">
    <location>
        <position position="154"/>
    </location>
    <ligand>
        <name>UDP-N-acetyl-alpha-D-glucosamine</name>
        <dbReference type="ChEBI" id="CHEBI:57705"/>
    </ligand>
</feature>
<feature type="binding site" evidence="1">
    <location>
        <position position="227"/>
    </location>
    <ligand>
        <name>Mg(2+)</name>
        <dbReference type="ChEBI" id="CHEBI:18420"/>
    </ligand>
</feature>
<feature type="binding site" evidence="1">
    <location>
        <position position="227"/>
    </location>
    <ligand>
        <name>UDP-N-acetyl-alpha-D-glucosamine</name>
        <dbReference type="ChEBI" id="CHEBI:57705"/>
    </ligand>
</feature>
<feature type="binding site" evidence="1">
    <location>
        <position position="333"/>
    </location>
    <ligand>
        <name>UDP-N-acetyl-alpha-D-glucosamine</name>
        <dbReference type="ChEBI" id="CHEBI:57705"/>
    </ligand>
</feature>
<feature type="binding site" evidence="1">
    <location>
        <position position="351"/>
    </location>
    <ligand>
        <name>UDP-N-acetyl-alpha-D-glucosamine</name>
        <dbReference type="ChEBI" id="CHEBI:57705"/>
    </ligand>
</feature>
<feature type="binding site" evidence="1">
    <location>
        <position position="366"/>
    </location>
    <ligand>
        <name>UDP-N-acetyl-alpha-D-glucosamine</name>
        <dbReference type="ChEBI" id="CHEBI:57705"/>
    </ligand>
</feature>
<feature type="binding site" evidence="1">
    <location>
        <position position="377"/>
    </location>
    <ligand>
        <name>UDP-N-acetyl-alpha-D-glucosamine</name>
        <dbReference type="ChEBI" id="CHEBI:57705"/>
    </ligand>
</feature>
<feature type="binding site" evidence="1">
    <location>
        <position position="380"/>
    </location>
    <ligand>
        <name>acetyl-CoA</name>
        <dbReference type="ChEBI" id="CHEBI:57288"/>
    </ligand>
</feature>
<feature type="binding site" evidence="1">
    <location>
        <begin position="386"/>
        <end position="387"/>
    </location>
    <ligand>
        <name>acetyl-CoA</name>
        <dbReference type="ChEBI" id="CHEBI:57288"/>
    </ligand>
</feature>
<feature type="binding site" evidence="1">
    <location>
        <position position="405"/>
    </location>
    <ligand>
        <name>acetyl-CoA</name>
        <dbReference type="ChEBI" id="CHEBI:57288"/>
    </ligand>
</feature>
<feature type="binding site" evidence="1">
    <location>
        <position position="423"/>
    </location>
    <ligand>
        <name>acetyl-CoA</name>
        <dbReference type="ChEBI" id="CHEBI:57288"/>
    </ligand>
</feature>
<comment type="function">
    <text evidence="1">Catalyzes the last two sequential reactions in the de novo biosynthetic pathway for UDP-N-acetylglucosamine (UDP-GlcNAc). The C-terminal domain catalyzes the transfer of acetyl group from acetyl coenzyme A to glucosamine-1-phosphate (GlcN-1-P) to produce N-acetylglucosamine-1-phosphate (GlcNAc-1-P), which is converted into UDP-GlcNAc by the transfer of uridine 5-monophosphate (from uridine 5-triphosphate), a reaction catalyzed by the N-terminal domain.</text>
</comment>
<comment type="catalytic activity">
    <reaction evidence="1">
        <text>alpha-D-glucosamine 1-phosphate + acetyl-CoA = N-acetyl-alpha-D-glucosamine 1-phosphate + CoA + H(+)</text>
        <dbReference type="Rhea" id="RHEA:13725"/>
        <dbReference type="ChEBI" id="CHEBI:15378"/>
        <dbReference type="ChEBI" id="CHEBI:57287"/>
        <dbReference type="ChEBI" id="CHEBI:57288"/>
        <dbReference type="ChEBI" id="CHEBI:57776"/>
        <dbReference type="ChEBI" id="CHEBI:58516"/>
        <dbReference type="EC" id="2.3.1.157"/>
    </reaction>
</comment>
<comment type="catalytic activity">
    <reaction evidence="1">
        <text>N-acetyl-alpha-D-glucosamine 1-phosphate + UTP + H(+) = UDP-N-acetyl-alpha-D-glucosamine + diphosphate</text>
        <dbReference type="Rhea" id="RHEA:13509"/>
        <dbReference type="ChEBI" id="CHEBI:15378"/>
        <dbReference type="ChEBI" id="CHEBI:33019"/>
        <dbReference type="ChEBI" id="CHEBI:46398"/>
        <dbReference type="ChEBI" id="CHEBI:57705"/>
        <dbReference type="ChEBI" id="CHEBI:57776"/>
        <dbReference type="EC" id="2.7.7.23"/>
    </reaction>
</comment>
<comment type="cofactor">
    <cofactor evidence="1">
        <name>Mg(2+)</name>
        <dbReference type="ChEBI" id="CHEBI:18420"/>
    </cofactor>
    <text evidence="1">Binds 1 Mg(2+) ion per subunit.</text>
</comment>
<comment type="pathway">
    <text evidence="1">Nucleotide-sugar biosynthesis; UDP-N-acetyl-alpha-D-glucosamine biosynthesis; N-acetyl-alpha-D-glucosamine 1-phosphate from alpha-D-glucosamine 6-phosphate (route II): step 2/2.</text>
</comment>
<comment type="pathway">
    <text evidence="1">Nucleotide-sugar biosynthesis; UDP-N-acetyl-alpha-D-glucosamine biosynthesis; UDP-N-acetyl-alpha-D-glucosamine from N-acetyl-alpha-D-glucosamine 1-phosphate: step 1/1.</text>
</comment>
<comment type="pathway">
    <text evidence="1">Bacterial outer membrane biogenesis; LPS lipid A biosynthesis.</text>
</comment>
<comment type="subunit">
    <text evidence="1">Homotrimer.</text>
</comment>
<comment type="subcellular location">
    <subcellularLocation>
        <location evidence="1">Cytoplasm</location>
    </subcellularLocation>
</comment>
<comment type="similarity">
    <text evidence="1">In the N-terminal section; belongs to the N-acetylglucosamine-1-phosphate uridyltransferase family.</text>
</comment>
<comment type="similarity">
    <text evidence="1">In the C-terminal section; belongs to the transferase hexapeptide repeat family.</text>
</comment>
<accession>P57139</accession>
<sequence length="459" mass="51182">MLTQEIIIVILAAGKGTRMKSNHPKVLHFLGGKTILEHVIETAQSIKPKKIILVYSDQKKPVLSNIYNIPIQWIIQKKPQGTGHAILLAIKKISDNTEILVLYGDVPFISPVSIKKLQKSKKQSKISLLTAKVKNPNGYGRILRKKGKVISIIEDQDASNEQKNIKEIYSGIFIAQSKDLTRWLKKIDKKNEKQEFYATDIIALAHLEGSFIKTIEPLNYEEILGINNKLQLSNLEKIFQKKQINKLLINGVTIKDPSHFIFRGTLQHGQNVEIDTGVILENNVILGDDVKIGPGCIIRNSSIDSNTNIQAYTIIENSKIGKGCIIGPFAHLRSNTLLDRNVHIGNFVETKDTFIKNESKVKHLSYLGNSEIGSKVNIGAGSITCNYDGANKFKTIIGDNVLVGSNTQLIAPIKIAKNTTIAAGTTVTKDVNTPCLVYNTKEQKYKKNWMRSKKIIKKN</sequence>
<evidence type="ECO:0000255" key="1">
    <source>
        <dbReference type="HAMAP-Rule" id="MF_01631"/>
    </source>
</evidence>
<keyword id="KW-0012">Acyltransferase</keyword>
<keyword id="KW-0133">Cell shape</keyword>
<keyword id="KW-0961">Cell wall biogenesis/degradation</keyword>
<keyword id="KW-0963">Cytoplasm</keyword>
<keyword id="KW-0460">Magnesium</keyword>
<keyword id="KW-0479">Metal-binding</keyword>
<keyword id="KW-0511">Multifunctional enzyme</keyword>
<keyword id="KW-0548">Nucleotidyltransferase</keyword>
<keyword id="KW-0573">Peptidoglycan synthesis</keyword>
<keyword id="KW-1185">Reference proteome</keyword>
<keyword id="KW-0677">Repeat</keyword>
<keyword id="KW-0808">Transferase</keyword>
<name>GLMU_BUCAI</name>